<sequence length="543" mass="61761">MLVKPMACYFEIWTRKVTTIEDFSLAIANRFKQMGSHSDSEVDWDNEEEVWEDEVHEFCCLFCDSTFTCLKDLWSHCKEAHNFDFYQVKQQNNLDFYACIKLVNYIRSQVKEGKTPDLDKLSDILRSDEYMISVLPDDSVLFSLGDELDSDFEDDNTLEIEVENPADVSKDAEIKKLKLQNQLLISQLEEIRKDKMNELTSQTTDQLSVTPKKADNDSYYFESYAGNDIHFLMLNDSVRTEGYRDFVYHNKHIFAGKTVLDVGCGTGILSMFCAKAGAKKVYAVDNSDIIQMAISNAFENGLADQITFIRGKIEDISLPVGKVDIIISEWMGYALTFESMIDSVLVARDRFLAPSGIMAPSETRLVLTATTNTELLEEPIDFWSDVYGFKMNGMKDASYKGVSVQVVPQTYVNAKPVVFARFNMHTCKVQDVSFTSPFSLIIDNEGPLCAFTLWFDTYFTTKRTQPIPEAIDEACGFTTGPQGTPTHWKQCVLLLRNRPFLQKGTRVEGTISFSKNKKNNRDLDISVHWNVNGKADSQSYVLN</sequence>
<feature type="chain" id="PRO_0000351450" description="Ribosomal protein arginine N-methyltransferase rmt3">
    <location>
        <begin position="1"/>
        <end position="543"/>
    </location>
</feature>
<feature type="domain" description="SAM-dependent MTase PRMT-type" evidence="3">
    <location>
        <begin position="217"/>
        <end position="543"/>
    </location>
</feature>
<feature type="zinc finger region" description="C2H2-type">
    <location>
        <begin position="58"/>
        <end position="81"/>
    </location>
</feature>
<feature type="active site" evidence="2">
    <location>
        <position position="329"/>
    </location>
</feature>
<feature type="active site" evidence="2">
    <location>
        <position position="338"/>
    </location>
</feature>
<feature type="binding site" evidence="2">
    <location>
        <position position="239"/>
    </location>
    <ligand>
        <name>S-adenosyl-L-homocysteine</name>
        <dbReference type="ChEBI" id="CHEBI:57856"/>
    </ligand>
</feature>
<feature type="binding site" evidence="2">
    <location>
        <position position="263"/>
    </location>
    <ligand>
        <name>S-adenosyl-L-homocysteine</name>
        <dbReference type="ChEBI" id="CHEBI:57856"/>
    </ligand>
</feature>
<feature type="binding site" evidence="2">
    <location>
        <position position="285"/>
    </location>
    <ligand>
        <name>S-adenosyl-L-homocysteine</name>
        <dbReference type="ChEBI" id="CHEBI:57856"/>
    </ligand>
</feature>
<feature type="binding site" evidence="2">
    <location>
        <position position="287"/>
    </location>
    <ligand>
        <name>S-adenosyl-L-homocysteine</name>
        <dbReference type="ChEBI" id="CHEBI:57856"/>
    </ligand>
</feature>
<feature type="binding site" evidence="2">
    <location>
        <position position="313"/>
    </location>
    <ligand>
        <name>S-adenosyl-L-homocysteine</name>
        <dbReference type="ChEBI" id="CHEBI:57856"/>
    </ligand>
</feature>
<feature type="binding site" evidence="2">
    <location>
        <position position="314"/>
    </location>
    <ligand>
        <name>S-adenosyl-L-homocysteine</name>
        <dbReference type="ChEBI" id="CHEBI:57856"/>
    </ligand>
</feature>
<accession>O13648</accession>
<accession>Q7LWE1</accession>
<reference key="1">
    <citation type="journal article" date="2000" name="Yeast">
        <title>A 38 kb segment containing the cdc2 gene from the left arm of fission yeast chromosome II: sequence analysis and characterization of the genomic DNA and cDNAs encoded on the segment.</title>
        <authorList>
            <person name="Machida M."/>
            <person name="Yamazaki S."/>
            <person name="Kunihiro S."/>
            <person name="Tanaka T."/>
            <person name="Kushida N."/>
            <person name="Jinno K."/>
            <person name="Haikawa Y."/>
            <person name="Yamazaki J."/>
            <person name="Yamamoto S."/>
            <person name="Sekine M."/>
            <person name="Oguchi A."/>
            <person name="Nagai Y."/>
            <person name="Sakai M."/>
            <person name="Aoki K."/>
            <person name="Ogura K."/>
            <person name="Kudoh Y."/>
            <person name="Kikuchi H."/>
            <person name="Zhang M.Q."/>
            <person name="Yanagida M."/>
        </authorList>
    </citation>
    <scope>NUCLEOTIDE SEQUENCE [GENOMIC DNA]</scope>
    <source>
        <strain>972 / ATCC 24843</strain>
    </source>
</reference>
<reference key="2">
    <citation type="journal article" date="2002" name="Nature">
        <title>The genome sequence of Schizosaccharomyces pombe.</title>
        <authorList>
            <person name="Wood V."/>
            <person name="Gwilliam R."/>
            <person name="Rajandream M.A."/>
            <person name="Lyne M.H."/>
            <person name="Lyne R."/>
            <person name="Stewart A."/>
            <person name="Sgouros J.G."/>
            <person name="Peat N."/>
            <person name="Hayles J."/>
            <person name="Baker S.G."/>
            <person name="Basham D."/>
            <person name="Bowman S."/>
            <person name="Brooks K."/>
            <person name="Brown D."/>
            <person name="Brown S."/>
            <person name="Chillingworth T."/>
            <person name="Churcher C.M."/>
            <person name="Collins M."/>
            <person name="Connor R."/>
            <person name="Cronin A."/>
            <person name="Davis P."/>
            <person name="Feltwell T."/>
            <person name="Fraser A."/>
            <person name="Gentles S."/>
            <person name="Goble A."/>
            <person name="Hamlin N."/>
            <person name="Harris D.E."/>
            <person name="Hidalgo J."/>
            <person name="Hodgson G."/>
            <person name="Holroyd S."/>
            <person name="Hornsby T."/>
            <person name="Howarth S."/>
            <person name="Huckle E.J."/>
            <person name="Hunt S."/>
            <person name="Jagels K."/>
            <person name="James K.D."/>
            <person name="Jones L."/>
            <person name="Jones M."/>
            <person name="Leather S."/>
            <person name="McDonald S."/>
            <person name="McLean J."/>
            <person name="Mooney P."/>
            <person name="Moule S."/>
            <person name="Mungall K.L."/>
            <person name="Murphy L.D."/>
            <person name="Niblett D."/>
            <person name="Odell C."/>
            <person name="Oliver K."/>
            <person name="O'Neil S."/>
            <person name="Pearson D."/>
            <person name="Quail M.A."/>
            <person name="Rabbinowitsch E."/>
            <person name="Rutherford K.M."/>
            <person name="Rutter S."/>
            <person name="Saunders D."/>
            <person name="Seeger K."/>
            <person name="Sharp S."/>
            <person name="Skelton J."/>
            <person name="Simmonds M.N."/>
            <person name="Squares R."/>
            <person name="Squares S."/>
            <person name="Stevens K."/>
            <person name="Taylor K."/>
            <person name="Taylor R.G."/>
            <person name="Tivey A."/>
            <person name="Walsh S.V."/>
            <person name="Warren T."/>
            <person name="Whitehead S."/>
            <person name="Woodward J.R."/>
            <person name="Volckaert G."/>
            <person name="Aert R."/>
            <person name="Robben J."/>
            <person name="Grymonprez B."/>
            <person name="Weltjens I."/>
            <person name="Vanstreels E."/>
            <person name="Rieger M."/>
            <person name="Schaefer M."/>
            <person name="Mueller-Auer S."/>
            <person name="Gabel C."/>
            <person name="Fuchs M."/>
            <person name="Duesterhoeft A."/>
            <person name="Fritzc C."/>
            <person name="Holzer E."/>
            <person name="Moestl D."/>
            <person name="Hilbert H."/>
            <person name="Borzym K."/>
            <person name="Langer I."/>
            <person name="Beck A."/>
            <person name="Lehrach H."/>
            <person name="Reinhardt R."/>
            <person name="Pohl T.M."/>
            <person name="Eger P."/>
            <person name="Zimmermann W."/>
            <person name="Wedler H."/>
            <person name="Wambutt R."/>
            <person name="Purnelle B."/>
            <person name="Goffeau A."/>
            <person name="Cadieu E."/>
            <person name="Dreano S."/>
            <person name="Gloux S."/>
            <person name="Lelaure V."/>
            <person name="Mottier S."/>
            <person name="Galibert F."/>
            <person name="Aves S.J."/>
            <person name="Xiang Z."/>
            <person name="Hunt C."/>
            <person name="Moore K."/>
            <person name="Hurst S.M."/>
            <person name="Lucas M."/>
            <person name="Rochet M."/>
            <person name="Gaillardin C."/>
            <person name="Tallada V.A."/>
            <person name="Garzon A."/>
            <person name="Thode G."/>
            <person name="Daga R.R."/>
            <person name="Cruzado L."/>
            <person name="Jimenez J."/>
            <person name="Sanchez M."/>
            <person name="del Rey F."/>
            <person name="Benito J."/>
            <person name="Dominguez A."/>
            <person name="Revuelta J.L."/>
            <person name="Moreno S."/>
            <person name="Armstrong J."/>
            <person name="Forsburg S.L."/>
            <person name="Cerutti L."/>
            <person name="Lowe T."/>
            <person name="McCombie W.R."/>
            <person name="Paulsen I."/>
            <person name="Potashkin J."/>
            <person name="Shpakovski G.V."/>
            <person name="Ussery D."/>
            <person name="Barrell B.G."/>
            <person name="Nurse P."/>
        </authorList>
    </citation>
    <scope>NUCLEOTIDE SEQUENCE [LARGE SCALE GENOMIC DNA]</scope>
    <source>
        <strain>972 / ATCC 24843</strain>
    </source>
</reference>
<reference key="3">
    <citation type="journal article" date="2004" name="EMBO J.">
        <title>PRMT3 is a ribosomal protein methyltransferase that affects the cellular levels of ribosomal subunits.</title>
        <authorList>
            <person name="Bachand F."/>
            <person name="Silver P.A."/>
        </authorList>
    </citation>
    <scope>FUNCTION</scope>
    <scope>SUBCELLULAR LOCATION</scope>
    <scope>INTERACTION WITH EF1A-C; RPS2 AND RPS24</scope>
    <scope>ASSOCIATION WITH THE 40S RIBOSOMAL PARTICLE</scope>
</reference>
<reference key="4">
    <citation type="journal article" date="2006" name="Mol. Cell. Biol.">
        <title>Autoregulation of ribosome biosynthesis by a translational response in fission yeast.</title>
        <authorList>
            <person name="Bachand F."/>
            <person name="Lackner D.H."/>
            <person name="Baehler J."/>
            <person name="Silver P.A."/>
        </authorList>
    </citation>
    <scope>FUNCTION</scope>
</reference>
<organism>
    <name type="scientific">Schizosaccharomyces pombe (strain 972 / ATCC 24843)</name>
    <name type="common">Fission yeast</name>
    <dbReference type="NCBI Taxonomy" id="284812"/>
    <lineage>
        <taxon>Eukaryota</taxon>
        <taxon>Fungi</taxon>
        <taxon>Dikarya</taxon>
        <taxon>Ascomycota</taxon>
        <taxon>Taphrinomycotina</taxon>
        <taxon>Schizosaccharomycetes</taxon>
        <taxon>Schizosaccharomycetales</taxon>
        <taxon>Schizosaccharomycetaceae</taxon>
        <taxon>Schizosaccharomyces</taxon>
    </lineage>
</organism>
<evidence type="ECO:0000250" key="1">
    <source>
        <dbReference type="UniProtKB" id="O60678"/>
    </source>
</evidence>
<evidence type="ECO:0000250" key="2">
    <source>
        <dbReference type="UniProtKB" id="O70467"/>
    </source>
</evidence>
<evidence type="ECO:0000255" key="3">
    <source>
        <dbReference type="PROSITE-ProRule" id="PRU01015"/>
    </source>
</evidence>
<evidence type="ECO:0000269" key="4">
    <source>
    </source>
</evidence>
<evidence type="ECO:0000269" key="5">
    <source>
    </source>
</evidence>
<evidence type="ECO:0000305" key="6"/>
<protein>
    <recommendedName>
        <fullName>Ribosomal protein arginine N-methyltransferase rmt3</fullName>
        <ecNumber evidence="1">2.1.1.319</ecNumber>
    </recommendedName>
</protein>
<keyword id="KW-0963">Cytoplasm</keyword>
<keyword id="KW-0479">Metal-binding</keyword>
<keyword id="KW-0489">Methyltransferase</keyword>
<keyword id="KW-1185">Reference proteome</keyword>
<keyword id="KW-0949">S-adenosyl-L-methionine</keyword>
<keyword id="KW-0808">Transferase</keyword>
<keyword id="KW-0862">Zinc</keyword>
<keyword id="KW-0863">Zinc-finger</keyword>
<dbReference type="EC" id="2.1.1.319" evidence="1"/>
<dbReference type="EMBL" id="AB004538">
    <property type="protein sequence ID" value="BAA21436.1"/>
    <property type="status" value="ALT_SEQ"/>
    <property type="molecule type" value="Genomic_DNA"/>
</dbReference>
<dbReference type="EMBL" id="CU329671">
    <property type="protein sequence ID" value="CAA17825.2"/>
    <property type="molecule type" value="Genomic_DNA"/>
</dbReference>
<dbReference type="PIR" id="T40755">
    <property type="entry name" value="T40755"/>
</dbReference>
<dbReference type="RefSeq" id="NP_595572.1">
    <property type="nucleotide sequence ID" value="NM_001021467.2"/>
</dbReference>
<dbReference type="SMR" id="O13648"/>
<dbReference type="BioGRID" id="277762">
    <property type="interactions" value="236"/>
</dbReference>
<dbReference type="FunCoup" id="O13648">
    <property type="interactions" value="274"/>
</dbReference>
<dbReference type="IntAct" id="O13648">
    <property type="interactions" value="3"/>
</dbReference>
<dbReference type="STRING" id="284812.O13648"/>
<dbReference type="PaxDb" id="4896-SPBC8D2.10c.1"/>
<dbReference type="EnsemblFungi" id="SPBC8D2.10c.1">
    <property type="protein sequence ID" value="SPBC8D2.10c.1:pep"/>
    <property type="gene ID" value="SPBC8D2.10c"/>
</dbReference>
<dbReference type="GeneID" id="2541248"/>
<dbReference type="KEGG" id="spo:2541248"/>
<dbReference type="PomBase" id="SPBC8D2.10c">
    <property type="gene designation" value="rmt3"/>
</dbReference>
<dbReference type="VEuPathDB" id="FungiDB:SPBC8D2.10c"/>
<dbReference type="eggNOG" id="KOG1499">
    <property type="taxonomic scope" value="Eukaryota"/>
</dbReference>
<dbReference type="HOGENOM" id="CLU_017375_6_0_1"/>
<dbReference type="InParanoid" id="O13648"/>
<dbReference type="OMA" id="EWIADST"/>
<dbReference type="PhylomeDB" id="O13648"/>
<dbReference type="Reactome" id="R-SPO-3214858">
    <property type="pathway name" value="RMTs methylate histone arginines"/>
</dbReference>
<dbReference type="Reactome" id="R-SPO-8876725">
    <property type="pathway name" value="Protein methylation"/>
</dbReference>
<dbReference type="Reactome" id="R-SPO-9018519">
    <property type="pathway name" value="Estrogen-dependent gene expression"/>
</dbReference>
<dbReference type="PRO" id="PR:O13648"/>
<dbReference type="Proteomes" id="UP000002485">
    <property type="component" value="Chromosome II"/>
</dbReference>
<dbReference type="GO" id="GO:0005737">
    <property type="term" value="C:cytoplasm"/>
    <property type="evidence" value="ECO:0000314"/>
    <property type="project" value="PomBase"/>
</dbReference>
<dbReference type="GO" id="GO:0005829">
    <property type="term" value="C:cytosol"/>
    <property type="evidence" value="ECO:0007005"/>
    <property type="project" value="PomBase"/>
</dbReference>
<dbReference type="GO" id="GO:0005634">
    <property type="term" value="C:nucleus"/>
    <property type="evidence" value="ECO:0000318"/>
    <property type="project" value="GO_Central"/>
</dbReference>
<dbReference type="GO" id="GO:0042054">
    <property type="term" value="F:histone methyltransferase activity"/>
    <property type="evidence" value="ECO:0000318"/>
    <property type="project" value="GO_Central"/>
</dbReference>
<dbReference type="GO" id="GO:0016274">
    <property type="term" value="F:protein-arginine N-methyltransferase activity"/>
    <property type="evidence" value="ECO:0000315"/>
    <property type="project" value="PomBase"/>
</dbReference>
<dbReference type="GO" id="GO:0035242">
    <property type="term" value="F:protein-arginine omega-N asymmetric methyltransferase activity"/>
    <property type="evidence" value="ECO:0000269"/>
    <property type="project" value="PomBase"/>
</dbReference>
<dbReference type="GO" id="GO:0035241">
    <property type="term" value="F:protein-arginine omega-N monomethyltransferase activity"/>
    <property type="evidence" value="ECO:0007669"/>
    <property type="project" value="RHEA"/>
</dbReference>
<dbReference type="GO" id="GO:0043022">
    <property type="term" value="F:ribosome binding"/>
    <property type="evidence" value="ECO:0000314"/>
    <property type="project" value="PomBase"/>
</dbReference>
<dbReference type="GO" id="GO:0008270">
    <property type="term" value="F:zinc ion binding"/>
    <property type="evidence" value="ECO:0007669"/>
    <property type="project" value="UniProtKB-KW"/>
</dbReference>
<dbReference type="GO" id="GO:0006338">
    <property type="term" value="P:chromatin remodeling"/>
    <property type="evidence" value="ECO:0000318"/>
    <property type="project" value="GO_Central"/>
</dbReference>
<dbReference type="GO" id="GO:0032259">
    <property type="term" value="P:methylation"/>
    <property type="evidence" value="ECO:0007669"/>
    <property type="project" value="UniProtKB-KW"/>
</dbReference>
<dbReference type="GO" id="GO:0006355">
    <property type="term" value="P:regulation of DNA-templated transcription"/>
    <property type="evidence" value="ECO:0000318"/>
    <property type="project" value="GO_Central"/>
</dbReference>
<dbReference type="GO" id="GO:0042254">
    <property type="term" value="P:ribosome biogenesis"/>
    <property type="evidence" value="ECO:0000315"/>
    <property type="project" value="PomBase"/>
</dbReference>
<dbReference type="CDD" id="cd02440">
    <property type="entry name" value="AdoMet_MTases"/>
    <property type="match status" value="1"/>
</dbReference>
<dbReference type="FunFam" id="3.40.50.150:FF:000003">
    <property type="entry name" value="Blast:Protein arginine N-methyltransferase 1"/>
    <property type="match status" value="1"/>
</dbReference>
<dbReference type="FunFam" id="2.70.160.11:FF:000016">
    <property type="entry name" value="Protein arginine methyltransferase RmtB"/>
    <property type="match status" value="1"/>
</dbReference>
<dbReference type="Gene3D" id="2.70.160.11">
    <property type="entry name" value="Hnrnp arginine n-methyltransferase1"/>
    <property type="match status" value="1"/>
</dbReference>
<dbReference type="Gene3D" id="3.40.50.150">
    <property type="entry name" value="Vaccinia Virus protein VP39"/>
    <property type="match status" value="1"/>
</dbReference>
<dbReference type="InterPro" id="IPR049482">
    <property type="entry name" value="ANM3-like_C2H2_Zf"/>
</dbReference>
<dbReference type="InterPro" id="IPR025799">
    <property type="entry name" value="Arg_MeTrfase"/>
</dbReference>
<dbReference type="InterPro" id="IPR055135">
    <property type="entry name" value="PRMT_dom"/>
</dbReference>
<dbReference type="InterPro" id="IPR029063">
    <property type="entry name" value="SAM-dependent_MTases_sf"/>
</dbReference>
<dbReference type="InterPro" id="IPR036236">
    <property type="entry name" value="Znf_C2H2_sf"/>
</dbReference>
<dbReference type="InterPro" id="IPR013087">
    <property type="entry name" value="Znf_C2H2_type"/>
</dbReference>
<dbReference type="PANTHER" id="PTHR11006">
    <property type="entry name" value="PROTEIN ARGININE N-METHYLTRANSFERASE"/>
    <property type="match status" value="1"/>
</dbReference>
<dbReference type="PANTHER" id="PTHR11006:SF123">
    <property type="entry name" value="RIBOSOMAL PROTEIN ARGININE N-METHYLTRANSFERASE RMT3"/>
    <property type="match status" value="1"/>
</dbReference>
<dbReference type="Pfam" id="PF21137">
    <property type="entry name" value="ANM3_C2H2_Zf"/>
    <property type="match status" value="1"/>
</dbReference>
<dbReference type="Pfam" id="PF06325">
    <property type="entry name" value="PrmA"/>
    <property type="match status" value="1"/>
</dbReference>
<dbReference type="Pfam" id="PF22528">
    <property type="entry name" value="PRMT_C"/>
    <property type="match status" value="1"/>
</dbReference>
<dbReference type="SUPFAM" id="SSF57667">
    <property type="entry name" value="beta-beta-alpha zinc fingers"/>
    <property type="match status" value="1"/>
</dbReference>
<dbReference type="SUPFAM" id="SSF53335">
    <property type="entry name" value="S-adenosyl-L-methionine-dependent methyltransferases"/>
    <property type="match status" value="1"/>
</dbReference>
<dbReference type="PROSITE" id="PS51678">
    <property type="entry name" value="SAM_MT_PRMT"/>
    <property type="match status" value="1"/>
</dbReference>
<dbReference type="PROSITE" id="PS00028">
    <property type="entry name" value="ZINC_FINGER_C2H2_1"/>
    <property type="match status" value="1"/>
</dbReference>
<comment type="function">
    <text evidence="4 5">Methylates (mono and asymmetric dimethylation) the guanidino nitrogens of arginyl residues in ribosomal protein rps2.</text>
</comment>
<comment type="catalytic activity">
    <reaction evidence="1">
        <text>L-arginyl-[protein] + S-adenosyl-L-methionine = N(omega)-methyl-L-arginyl-[protein] + S-adenosyl-L-homocysteine + H(+)</text>
        <dbReference type="Rhea" id="RHEA:48100"/>
        <dbReference type="Rhea" id="RHEA-COMP:10532"/>
        <dbReference type="Rhea" id="RHEA-COMP:11990"/>
        <dbReference type="ChEBI" id="CHEBI:15378"/>
        <dbReference type="ChEBI" id="CHEBI:29965"/>
        <dbReference type="ChEBI" id="CHEBI:57856"/>
        <dbReference type="ChEBI" id="CHEBI:59789"/>
        <dbReference type="ChEBI" id="CHEBI:65280"/>
    </reaction>
    <physiologicalReaction direction="left-to-right" evidence="1">
        <dbReference type="Rhea" id="RHEA:48101"/>
    </physiologicalReaction>
</comment>
<comment type="catalytic activity">
    <reaction evidence="1">
        <text>L-arginyl-[protein] + 2 S-adenosyl-L-methionine = N(omega),N(omega)-dimethyl-L-arginyl-[protein] + 2 S-adenosyl-L-homocysteine + 2 H(+)</text>
        <dbReference type="Rhea" id="RHEA:48096"/>
        <dbReference type="Rhea" id="RHEA-COMP:10532"/>
        <dbReference type="Rhea" id="RHEA-COMP:11991"/>
        <dbReference type="ChEBI" id="CHEBI:15378"/>
        <dbReference type="ChEBI" id="CHEBI:29965"/>
        <dbReference type="ChEBI" id="CHEBI:57856"/>
        <dbReference type="ChEBI" id="CHEBI:59789"/>
        <dbReference type="ChEBI" id="CHEBI:61897"/>
        <dbReference type="EC" id="2.1.1.319"/>
    </reaction>
    <physiologicalReaction direction="left-to-right" evidence="1">
        <dbReference type="Rhea" id="RHEA:48097"/>
    </physiologicalReaction>
</comment>
<comment type="subunit">
    <text evidence="4">Interacts with ef1a-c, rps2 and rps24. Note=Associates with the 40S ribosomal particle.</text>
</comment>
<comment type="interaction">
    <interactant intactId="EBI-367706">
        <id>O13648</id>
    </interactant>
    <interactant intactId="EBI-367715">
        <id>O74892</id>
        <label>rps2</label>
    </interactant>
    <organismsDiffer>false</organismsDiffer>
    <experiments>2</experiments>
</comment>
<comment type="subcellular location">
    <subcellularLocation>
        <location evidence="4">Cytoplasm</location>
        <location evidence="4">Cytosol</location>
    </subcellularLocation>
</comment>
<comment type="similarity">
    <text evidence="3">Belongs to the class I-like SAM-binding methyltransferase superfamily. Protein arginine N-methyltransferase family.</text>
</comment>
<comment type="sequence caution" evidence="6">
    <conflict type="erroneous gene model prediction">
        <sequence resource="EMBL-CDS" id="BAA21436"/>
    </conflict>
</comment>
<name>ANM3_SCHPO</name>
<proteinExistence type="evidence at protein level"/>
<gene>
    <name type="primary">rmt3</name>
    <name type="synonym">prmt3</name>
    <name type="ORF">SPBC8D2.10c</name>
</gene>